<comment type="function">
    <text evidence="1">Regulatory subunit of a potassium efflux system that confers protection against electrophiles. Required for full activity of KefB.</text>
</comment>
<comment type="catalytic activity">
    <reaction evidence="1">
        <text>a quinone + NADH + H(+) = a quinol + NAD(+)</text>
        <dbReference type="Rhea" id="RHEA:46160"/>
        <dbReference type="ChEBI" id="CHEBI:15378"/>
        <dbReference type="ChEBI" id="CHEBI:24646"/>
        <dbReference type="ChEBI" id="CHEBI:57540"/>
        <dbReference type="ChEBI" id="CHEBI:57945"/>
        <dbReference type="ChEBI" id="CHEBI:132124"/>
        <dbReference type="EC" id="1.6.5.2"/>
    </reaction>
</comment>
<comment type="catalytic activity">
    <reaction evidence="1">
        <text>a quinone + NADPH + H(+) = a quinol + NADP(+)</text>
        <dbReference type="Rhea" id="RHEA:46164"/>
        <dbReference type="ChEBI" id="CHEBI:15378"/>
        <dbReference type="ChEBI" id="CHEBI:24646"/>
        <dbReference type="ChEBI" id="CHEBI:57783"/>
        <dbReference type="ChEBI" id="CHEBI:58349"/>
        <dbReference type="ChEBI" id="CHEBI:132124"/>
        <dbReference type="EC" id="1.6.5.2"/>
    </reaction>
</comment>
<comment type="subunit">
    <text evidence="1">Interacts with KefB.</text>
</comment>
<comment type="subcellular location">
    <subcellularLocation>
        <location evidence="1">Cell inner membrane</location>
        <topology evidence="1">Peripheral membrane protein</topology>
        <orientation evidence="1">Cytoplasmic side</orientation>
    </subcellularLocation>
</comment>
<comment type="similarity">
    <text evidence="1">Belongs to the NAD(P)H dehydrogenase (quinone) family. KefG subfamily.</text>
</comment>
<dbReference type="EC" id="1.6.5.2" evidence="1"/>
<dbReference type="EMBL" id="CU928162">
    <property type="protein sequence ID" value="CAR10151.2"/>
    <property type="molecule type" value="Genomic_DNA"/>
</dbReference>
<dbReference type="SMR" id="B7N1D3"/>
<dbReference type="KEGG" id="ecq:ECED1_4013"/>
<dbReference type="HOGENOM" id="CLU_058643_0_1_6"/>
<dbReference type="Proteomes" id="UP000000748">
    <property type="component" value="Chromosome"/>
</dbReference>
<dbReference type="GO" id="GO:0005886">
    <property type="term" value="C:plasma membrane"/>
    <property type="evidence" value="ECO:0007669"/>
    <property type="project" value="UniProtKB-SubCell"/>
</dbReference>
<dbReference type="GO" id="GO:0009055">
    <property type="term" value="F:electron transfer activity"/>
    <property type="evidence" value="ECO:0007669"/>
    <property type="project" value="TreeGrafter"/>
</dbReference>
<dbReference type="GO" id="GO:0010181">
    <property type="term" value="F:FMN binding"/>
    <property type="evidence" value="ECO:0007669"/>
    <property type="project" value="TreeGrafter"/>
</dbReference>
<dbReference type="GO" id="GO:0050136">
    <property type="term" value="F:NADH:ubiquinone reductase (non-electrogenic) activity"/>
    <property type="evidence" value="ECO:0007669"/>
    <property type="project" value="RHEA"/>
</dbReference>
<dbReference type="GO" id="GO:0008753">
    <property type="term" value="F:NADPH dehydrogenase (quinone) activity"/>
    <property type="evidence" value="ECO:0007669"/>
    <property type="project" value="RHEA"/>
</dbReference>
<dbReference type="GO" id="GO:1901381">
    <property type="term" value="P:positive regulation of potassium ion transmembrane transport"/>
    <property type="evidence" value="ECO:0007669"/>
    <property type="project" value="UniProtKB-UniRule"/>
</dbReference>
<dbReference type="GO" id="GO:0006813">
    <property type="term" value="P:potassium ion transport"/>
    <property type="evidence" value="ECO:0007669"/>
    <property type="project" value="InterPro"/>
</dbReference>
<dbReference type="FunFam" id="3.40.50.360:FF:000013">
    <property type="entry name" value="Glutathione-regulated potassium-efflux system ancillary protein KefG"/>
    <property type="match status" value="1"/>
</dbReference>
<dbReference type="Gene3D" id="3.40.50.360">
    <property type="match status" value="1"/>
</dbReference>
<dbReference type="HAMAP" id="MF_01415">
    <property type="entry name" value="K_H_efflux_KefG"/>
    <property type="match status" value="1"/>
</dbReference>
<dbReference type="InterPro" id="IPR003680">
    <property type="entry name" value="Flavodoxin_fold"/>
</dbReference>
<dbReference type="InterPro" id="IPR029039">
    <property type="entry name" value="Flavoprotein-like_sf"/>
</dbReference>
<dbReference type="InterPro" id="IPR023947">
    <property type="entry name" value="K_H_efflux_KefG"/>
</dbReference>
<dbReference type="InterPro" id="IPR046980">
    <property type="entry name" value="KefG/KefF"/>
</dbReference>
<dbReference type="NCBIfam" id="NF003430">
    <property type="entry name" value="PRK04930.1"/>
    <property type="match status" value="1"/>
</dbReference>
<dbReference type="PANTHER" id="PTHR47307">
    <property type="entry name" value="GLUTATHIONE-REGULATED POTASSIUM-EFFLUX SYSTEM ANCILLARY PROTEIN KEFG"/>
    <property type="match status" value="1"/>
</dbReference>
<dbReference type="PANTHER" id="PTHR47307:SF1">
    <property type="entry name" value="GLUTATHIONE-REGULATED POTASSIUM-EFFLUX SYSTEM ANCILLARY PROTEIN KEFG"/>
    <property type="match status" value="1"/>
</dbReference>
<dbReference type="Pfam" id="PF02525">
    <property type="entry name" value="Flavodoxin_2"/>
    <property type="match status" value="1"/>
</dbReference>
<dbReference type="SUPFAM" id="SSF52218">
    <property type="entry name" value="Flavoproteins"/>
    <property type="match status" value="1"/>
</dbReference>
<proteinExistence type="inferred from homology"/>
<organism>
    <name type="scientific">Escherichia coli O81 (strain ED1a)</name>
    <dbReference type="NCBI Taxonomy" id="585397"/>
    <lineage>
        <taxon>Bacteria</taxon>
        <taxon>Pseudomonadati</taxon>
        <taxon>Pseudomonadota</taxon>
        <taxon>Gammaproteobacteria</taxon>
        <taxon>Enterobacterales</taxon>
        <taxon>Enterobacteriaceae</taxon>
        <taxon>Escherichia</taxon>
    </lineage>
</organism>
<name>KEFG_ECO81</name>
<evidence type="ECO:0000255" key="1">
    <source>
        <dbReference type="HAMAP-Rule" id="MF_01415"/>
    </source>
</evidence>
<keyword id="KW-0997">Cell inner membrane</keyword>
<keyword id="KW-1003">Cell membrane</keyword>
<keyword id="KW-0472">Membrane</keyword>
<keyword id="KW-0520">NAD</keyword>
<keyword id="KW-0560">Oxidoreductase</keyword>
<sequence>MMSQPAKVLLLYAHPESQDSVANRVLLKPATQLSNVTVHDLYAHYPDFFIDIPREQALLREHEVIVFQHPLYTYSCPALLKEWLDRVLSRGFASGPGGNQLAGKYWRSVITTGEPESAYRYDALNRYPMSDVLRPFELAAGMCRMHWLSPIIIYWARRQSAQELASHARAYGDWLANPLSPGGC</sequence>
<protein>
    <recommendedName>
        <fullName evidence="1">Glutathione-regulated potassium-efflux system ancillary protein KefG</fullName>
    </recommendedName>
    <alternativeName>
        <fullName evidence="1">Putative quinone oxidoreductase KefG</fullName>
        <ecNumber evidence="1">1.6.5.2</ecNumber>
    </alternativeName>
</protein>
<accession>B7N1D3</accession>
<gene>
    <name evidence="1" type="primary">kefG</name>
    <name type="ordered locus">ECED1_4013</name>
</gene>
<reference key="1">
    <citation type="journal article" date="2009" name="PLoS Genet.">
        <title>Organised genome dynamics in the Escherichia coli species results in highly diverse adaptive paths.</title>
        <authorList>
            <person name="Touchon M."/>
            <person name="Hoede C."/>
            <person name="Tenaillon O."/>
            <person name="Barbe V."/>
            <person name="Baeriswyl S."/>
            <person name="Bidet P."/>
            <person name="Bingen E."/>
            <person name="Bonacorsi S."/>
            <person name="Bouchier C."/>
            <person name="Bouvet O."/>
            <person name="Calteau A."/>
            <person name="Chiapello H."/>
            <person name="Clermont O."/>
            <person name="Cruveiller S."/>
            <person name="Danchin A."/>
            <person name="Diard M."/>
            <person name="Dossat C."/>
            <person name="Karoui M.E."/>
            <person name="Frapy E."/>
            <person name="Garry L."/>
            <person name="Ghigo J.M."/>
            <person name="Gilles A.M."/>
            <person name="Johnson J."/>
            <person name="Le Bouguenec C."/>
            <person name="Lescat M."/>
            <person name="Mangenot S."/>
            <person name="Martinez-Jehanne V."/>
            <person name="Matic I."/>
            <person name="Nassif X."/>
            <person name="Oztas S."/>
            <person name="Petit M.A."/>
            <person name="Pichon C."/>
            <person name="Rouy Z."/>
            <person name="Ruf C.S."/>
            <person name="Schneider D."/>
            <person name="Tourret J."/>
            <person name="Vacherie B."/>
            <person name="Vallenet D."/>
            <person name="Medigue C."/>
            <person name="Rocha E.P.C."/>
            <person name="Denamur E."/>
        </authorList>
    </citation>
    <scope>NUCLEOTIDE SEQUENCE [LARGE SCALE GENOMIC DNA]</scope>
    <source>
        <strain>ED1a</strain>
    </source>
</reference>
<feature type="chain" id="PRO_1000184625" description="Glutathione-regulated potassium-efflux system ancillary protein KefG">
    <location>
        <begin position="1"/>
        <end position="184"/>
    </location>
</feature>